<gene>
    <name evidence="1" type="primary">ribH</name>
    <name type="ordered locus">ECH74115_0497</name>
</gene>
<sequence>MNIIEANVATPDARVAITIARFNNFINDSLLEGAIDALKRIGQVKDENITVVWVPGAYELPLAAGALAKTGKYDAVIALGTVIRGGTAHFEYVAGGASNGLAHVAQDSEIPVAFGVLTTESIEQAIERAGTKAGNKGAEAALTALEMINVLKAIKA</sequence>
<reference key="1">
    <citation type="journal article" date="2011" name="Proc. Natl. Acad. Sci. U.S.A.">
        <title>Genomic anatomy of Escherichia coli O157:H7 outbreaks.</title>
        <authorList>
            <person name="Eppinger M."/>
            <person name="Mammel M.K."/>
            <person name="Leclerc J.E."/>
            <person name="Ravel J."/>
            <person name="Cebula T.A."/>
        </authorList>
    </citation>
    <scope>NUCLEOTIDE SEQUENCE [LARGE SCALE GENOMIC DNA]</scope>
    <source>
        <strain>EC4115 / EHEC</strain>
    </source>
</reference>
<feature type="chain" id="PRO_1000098187" description="6,7-dimethyl-8-ribityllumazine synthase">
    <location>
        <begin position="1"/>
        <end position="156"/>
    </location>
</feature>
<feature type="active site" description="Proton donor" evidence="1">
    <location>
        <position position="89"/>
    </location>
</feature>
<feature type="binding site" evidence="1">
    <location>
        <position position="22"/>
    </location>
    <ligand>
        <name>5-amino-6-(D-ribitylamino)uracil</name>
        <dbReference type="ChEBI" id="CHEBI:15934"/>
    </ligand>
</feature>
<feature type="binding site" evidence="1">
    <location>
        <begin position="57"/>
        <end position="59"/>
    </location>
    <ligand>
        <name>5-amino-6-(D-ribitylamino)uracil</name>
        <dbReference type="ChEBI" id="CHEBI:15934"/>
    </ligand>
</feature>
<feature type="binding site" evidence="1">
    <location>
        <begin position="81"/>
        <end position="83"/>
    </location>
    <ligand>
        <name>5-amino-6-(D-ribitylamino)uracil</name>
        <dbReference type="ChEBI" id="CHEBI:15934"/>
    </ligand>
</feature>
<feature type="binding site" evidence="1">
    <location>
        <begin position="86"/>
        <end position="87"/>
    </location>
    <ligand>
        <name>(2S)-2-hydroxy-3-oxobutyl phosphate</name>
        <dbReference type="ChEBI" id="CHEBI:58830"/>
    </ligand>
</feature>
<feature type="binding site" evidence="1">
    <location>
        <position position="114"/>
    </location>
    <ligand>
        <name>5-amino-6-(D-ribitylamino)uracil</name>
        <dbReference type="ChEBI" id="CHEBI:15934"/>
    </ligand>
</feature>
<feature type="binding site" evidence="1">
    <location>
        <position position="128"/>
    </location>
    <ligand>
        <name>(2S)-2-hydroxy-3-oxobutyl phosphate</name>
        <dbReference type="ChEBI" id="CHEBI:58830"/>
    </ligand>
</feature>
<organism>
    <name type="scientific">Escherichia coli O157:H7 (strain EC4115 / EHEC)</name>
    <dbReference type="NCBI Taxonomy" id="444450"/>
    <lineage>
        <taxon>Bacteria</taxon>
        <taxon>Pseudomonadati</taxon>
        <taxon>Pseudomonadota</taxon>
        <taxon>Gammaproteobacteria</taxon>
        <taxon>Enterobacterales</taxon>
        <taxon>Enterobacteriaceae</taxon>
        <taxon>Escherichia</taxon>
    </lineage>
</organism>
<name>RISB_ECO5E</name>
<dbReference type="EC" id="2.5.1.78" evidence="1"/>
<dbReference type="EMBL" id="CP001164">
    <property type="protein sequence ID" value="ACI38957.1"/>
    <property type="molecule type" value="Genomic_DNA"/>
</dbReference>
<dbReference type="SMR" id="B5Z3R9"/>
<dbReference type="KEGG" id="ecf:ECH74115_0497"/>
<dbReference type="HOGENOM" id="CLU_089358_1_1_6"/>
<dbReference type="UniPathway" id="UPA00275">
    <property type="reaction ID" value="UER00404"/>
</dbReference>
<dbReference type="GO" id="GO:0005829">
    <property type="term" value="C:cytosol"/>
    <property type="evidence" value="ECO:0007669"/>
    <property type="project" value="TreeGrafter"/>
</dbReference>
<dbReference type="GO" id="GO:0009349">
    <property type="term" value="C:riboflavin synthase complex"/>
    <property type="evidence" value="ECO:0007669"/>
    <property type="project" value="InterPro"/>
</dbReference>
<dbReference type="GO" id="GO:0000906">
    <property type="term" value="F:6,7-dimethyl-8-ribityllumazine synthase activity"/>
    <property type="evidence" value="ECO:0007669"/>
    <property type="project" value="UniProtKB-UniRule"/>
</dbReference>
<dbReference type="GO" id="GO:0009231">
    <property type="term" value="P:riboflavin biosynthetic process"/>
    <property type="evidence" value="ECO:0007669"/>
    <property type="project" value="UniProtKB-UniRule"/>
</dbReference>
<dbReference type="CDD" id="cd09209">
    <property type="entry name" value="Lumazine_synthase-I"/>
    <property type="match status" value="1"/>
</dbReference>
<dbReference type="FunFam" id="3.40.50.960:FF:000001">
    <property type="entry name" value="6,7-dimethyl-8-ribityllumazine synthase"/>
    <property type="match status" value="1"/>
</dbReference>
<dbReference type="Gene3D" id="3.40.50.960">
    <property type="entry name" value="Lumazine/riboflavin synthase"/>
    <property type="match status" value="1"/>
</dbReference>
<dbReference type="HAMAP" id="MF_00178">
    <property type="entry name" value="Lumazine_synth"/>
    <property type="match status" value="1"/>
</dbReference>
<dbReference type="InterPro" id="IPR034964">
    <property type="entry name" value="LS"/>
</dbReference>
<dbReference type="InterPro" id="IPR002180">
    <property type="entry name" value="LS/RS"/>
</dbReference>
<dbReference type="InterPro" id="IPR036467">
    <property type="entry name" value="LS/RS_sf"/>
</dbReference>
<dbReference type="NCBIfam" id="TIGR00114">
    <property type="entry name" value="lumazine-synth"/>
    <property type="match status" value="1"/>
</dbReference>
<dbReference type="NCBIfam" id="NF000812">
    <property type="entry name" value="PRK00061.1-4"/>
    <property type="match status" value="1"/>
</dbReference>
<dbReference type="PANTHER" id="PTHR21058:SF0">
    <property type="entry name" value="6,7-DIMETHYL-8-RIBITYLLUMAZINE SYNTHASE"/>
    <property type="match status" value="1"/>
</dbReference>
<dbReference type="PANTHER" id="PTHR21058">
    <property type="entry name" value="6,7-DIMETHYL-8-RIBITYLLUMAZINE SYNTHASE DMRL SYNTHASE LUMAZINE SYNTHASE"/>
    <property type="match status" value="1"/>
</dbReference>
<dbReference type="Pfam" id="PF00885">
    <property type="entry name" value="DMRL_synthase"/>
    <property type="match status" value="1"/>
</dbReference>
<dbReference type="SUPFAM" id="SSF52121">
    <property type="entry name" value="Lumazine synthase"/>
    <property type="match status" value="1"/>
</dbReference>
<proteinExistence type="inferred from homology"/>
<keyword id="KW-0686">Riboflavin biosynthesis</keyword>
<keyword id="KW-0808">Transferase</keyword>
<evidence type="ECO:0000255" key="1">
    <source>
        <dbReference type="HAMAP-Rule" id="MF_00178"/>
    </source>
</evidence>
<protein>
    <recommendedName>
        <fullName evidence="1">6,7-dimethyl-8-ribityllumazine synthase</fullName>
        <shortName evidence="1">DMRL synthase</shortName>
        <shortName evidence="1">LS</shortName>
        <shortName evidence="1">Lumazine synthase</shortName>
        <ecNumber evidence="1">2.5.1.78</ecNumber>
    </recommendedName>
</protein>
<accession>B5Z3R9</accession>
<comment type="function">
    <text evidence="1">Catalyzes the formation of 6,7-dimethyl-8-ribityllumazine by condensation of 5-amino-6-(D-ribitylamino)uracil with 3,4-dihydroxy-2-butanone 4-phosphate. This is the penultimate step in the biosynthesis of riboflavin.</text>
</comment>
<comment type="catalytic activity">
    <reaction evidence="1">
        <text>(2S)-2-hydroxy-3-oxobutyl phosphate + 5-amino-6-(D-ribitylamino)uracil = 6,7-dimethyl-8-(1-D-ribityl)lumazine + phosphate + 2 H2O + H(+)</text>
        <dbReference type="Rhea" id="RHEA:26152"/>
        <dbReference type="ChEBI" id="CHEBI:15377"/>
        <dbReference type="ChEBI" id="CHEBI:15378"/>
        <dbReference type="ChEBI" id="CHEBI:15934"/>
        <dbReference type="ChEBI" id="CHEBI:43474"/>
        <dbReference type="ChEBI" id="CHEBI:58201"/>
        <dbReference type="ChEBI" id="CHEBI:58830"/>
        <dbReference type="EC" id="2.5.1.78"/>
    </reaction>
</comment>
<comment type="pathway">
    <text evidence="1">Cofactor biosynthesis; riboflavin biosynthesis; riboflavin from 2-hydroxy-3-oxobutyl phosphate and 5-amino-6-(D-ribitylamino)uracil: step 1/2.</text>
</comment>
<comment type="subunit">
    <text evidence="1">Forms an icosahedral capsid composed of 60 subunits, arranged as a dodecamer of pentamers.</text>
</comment>
<comment type="similarity">
    <text evidence="1">Belongs to the DMRL synthase family.</text>
</comment>